<protein>
    <recommendedName>
        <fullName evidence="1">NADH-quinone oxidoreductase subunit D</fullName>
        <ecNumber evidence="1">7.1.1.-</ecNumber>
    </recommendedName>
    <alternativeName>
        <fullName evidence="1">NADH dehydrogenase I subunit D</fullName>
    </alternativeName>
    <alternativeName>
        <fullName evidence="1">NDH-1 subunit D</fullName>
    </alternativeName>
</protein>
<comment type="function">
    <text evidence="1">NDH-1 shuttles electrons from NADH, via FMN and iron-sulfur (Fe-S) centers, to quinones in the respiratory chain. The immediate electron acceptor for the enzyme in this species is believed to be ubiquinone. Couples the redox reaction to proton translocation (for every two electrons transferred, four hydrogen ions are translocated across the cytoplasmic membrane), and thus conserves the redox energy in a proton gradient.</text>
</comment>
<comment type="catalytic activity">
    <reaction evidence="1">
        <text>a quinone + NADH + 5 H(+)(in) = a quinol + NAD(+) + 4 H(+)(out)</text>
        <dbReference type="Rhea" id="RHEA:57888"/>
        <dbReference type="ChEBI" id="CHEBI:15378"/>
        <dbReference type="ChEBI" id="CHEBI:24646"/>
        <dbReference type="ChEBI" id="CHEBI:57540"/>
        <dbReference type="ChEBI" id="CHEBI:57945"/>
        <dbReference type="ChEBI" id="CHEBI:132124"/>
    </reaction>
</comment>
<comment type="subunit">
    <text evidence="1">NDH-1 is composed of 14 different subunits. Subunits NuoB, C, D, E, F, and G constitute the peripheral sector of the complex.</text>
</comment>
<comment type="subcellular location">
    <subcellularLocation>
        <location evidence="1">Cell inner membrane</location>
        <topology evidence="1">Peripheral membrane protein</topology>
        <orientation evidence="1">Cytoplasmic side</orientation>
    </subcellularLocation>
</comment>
<comment type="similarity">
    <text evidence="1">Belongs to the complex I 49 kDa subunit family.</text>
</comment>
<evidence type="ECO:0000255" key="1">
    <source>
        <dbReference type="HAMAP-Rule" id="MF_01358"/>
    </source>
</evidence>
<organism>
    <name type="scientific">Ruegeria pomeroyi (strain ATCC 700808 / DSM 15171 / DSS-3)</name>
    <name type="common">Silicibacter pomeroyi</name>
    <dbReference type="NCBI Taxonomy" id="246200"/>
    <lineage>
        <taxon>Bacteria</taxon>
        <taxon>Pseudomonadati</taxon>
        <taxon>Pseudomonadota</taxon>
        <taxon>Alphaproteobacteria</taxon>
        <taxon>Rhodobacterales</taxon>
        <taxon>Roseobacteraceae</taxon>
        <taxon>Ruegeria</taxon>
    </lineage>
</organism>
<reference key="1">
    <citation type="journal article" date="2004" name="Nature">
        <title>Genome sequence of Silicibacter pomeroyi reveals adaptations to the marine environment.</title>
        <authorList>
            <person name="Moran M.A."/>
            <person name="Buchan A."/>
            <person name="Gonzalez J.M."/>
            <person name="Heidelberg J.F."/>
            <person name="Whitman W.B."/>
            <person name="Kiene R.P."/>
            <person name="Henriksen J.R."/>
            <person name="King G.M."/>
            <person name="Belas R."/>
            <person name="Fuqua C."/>
            <person name="Brinkac L.M."/>
            <person name="Lewis M."/>
            <person name="Johri S."/>
            <person name="Weaver B."/>
            <person name="Pai G."/>
            <person name="Eisen J.A."/>
            <person name="Rahe E."/>
            <person name="Sheldon W.M."/>
            <person name="Ye W."/>
            <person name="Miller T.R."/>
            <person name="Carlton J."/>
            <person name="Rasko D.A."/>
            <person name="Paulsen I.T."/>
            <person name="Ren Q."/>
            <person name="Daugherty S.C."/>
            <person name="DeBoy R.T."/>
            <person name="Dodson R.J."/>
            <person name="Durkin A.S."/>
            <person name="Madupu R."/>
            <person name="Nelson W.C."/>
            <person name="Sullivan S.A."/>
            <person name="Rosovitz M.J."/>
            <person name="Haft D.H."/>
            <person name="Selengut J."/>
            <person name="Ward N."/>
        </authorList>
    </citation>
    <scope>NUCLEOTIDE SEQUENCE [LARGE SCALE GENOMIC DNA]</scope>
    <source>
        <strain>ATCC 700808 / DSM 15171 / DSS-3</strain>
    </source>
</reference>
<reference key="2">
    <citation type="journal article" date="2014" name="Stand. Genomic Sci.">
        <title>An updated genome annotation for the model marine bacterium Ruegeria pomeroyi DSS-3.</title>
        <authorList>
            <person name="Rivers A.R."/>
            <person name="Smith C.B."/>
            <person name="Moran M.A."/>
        </authorList>
    </citation>
    <scope>GENOME REANNOTATION</scope>
    <source>
        <strain>ATCC 700808 / DSM 15171 / DSS-3</strain>
    </source>
</reference>
<accession>Q5LPR7</accession>
<name>NUOD_RUEPO</name>
<dbReference type="EC" id="7.1.1.-" evidence="1"/>
<dbReference type="EMBL" id="CP000031">
    <property type="protein sequence ID" value="AAV96023.1"/>
    <property type="molecule type" value="Genomic_DNA"/>
</dbReference>
<dbReference type="SMR" id="Q5LPR7"/>
<dbReference type="STRING" id="246200.SPO2782"/>
<dbReference type="PaxDb" id="246200-SPO2782"/>
<dbReference type="KEGG" id="sil:SPO2782"/>
<dbReference type="eggNOG" id="COG0649">
    <property type="taxonomic scope" value="Bacteria"/>
</dbReference>
<dbReference type="HOGENOM" id="CLU_015134_1_1_5"/>
<dbReference type="Proteomes" id="UP000001023">
    <property type="component" value="Chromosome"/>
</dbReference>
<dbReference type="GO" id="GO:0005886">
    <property type="term" value="C:plasma membrane"/>
    <property type="evidence" value="ECO:0007669"/>
    <property type="project" value="UniProtKB-SubCell"/>
</dbReference>
<dbReference type="GO" id="GO:0051287">
    <property type="term" value="F:NAD binding"/>
    <property type="evidence" value="ECO:0007669"/>
    <property type="project" value="InterPro"/>
</dbReference>
<dbReference type="GO" id="GO:0050136">
    <property type="term" value="F:NADH:ubiquinone reductase (non-electrogenic) activity"/>
    <property type="evidence" value="ECO:0007669"/>
    <property type="project" value="UniProtKB-UniRule"/>
</dbReference>
<dbReference type="GO" id="GO:0048038">
    <property type="term" value="F:quinone binding"/>
    <property type="evidence" value="ECO:0007669"/>
    <property type="project" value="UniProtKB-KW"/>
</dbReference>
<dbReference type="FunFam" id="1.10.645.10:FF:000005">
    <property type="entry name" value="NADH-quinone oxidoreductase subunit D"/>
    <property type="match status" value="1"/>
</dbReference>
<dbReference type="Gene3D" id="1.10.645.10">
    <property type="entry name" value="Cytochrome-c3 Hydrogenase, chain B"/>
    <property type="match status" value="1"/>
</dbReference>
<dbReference type="HAMAP" id="MF_01358">
    <property type="entry name" value="NDH1_NuoD"/>
    <property type="match status" value="1"/>
</dbReference>
<dbReference type="InterPro" id="IPR001135">
    <property type="entry name" value="NADH_Q_OxRdtase_suD"/>
</dbReference>
<dbReference type="InterPro" id="IPR014029">
    <property type="entry name" value="NADH_UbQ_OxRdtase_49kDa_CS"/>
</dbReference>
<dbReference type="InterPro" id="IPR022885">
    <property type="entry name" value="NDH1_su_D/H"/>
</dbReference>
<dbReference type="InterPro" id="IPR029014">
    <property type="entry name" value="NiFe-Hase_large"/>
</dbReference>
<dbReference type="NCBIfam" id="TIGR01962">
    <property type="entry name" value="NuoD"/>
    <property type="match status" value="1"/>
</dbReference>
<dbReference type="NCBIfam" id="NF004739">
    <property type="entry name" value="PRK06075.1"/>
    <property type="match status" value="1"/>
</dbReference>
<dbReference type="PANTHER" id="PTHR11993:SF10">
    <property type="entry name" value="NADH DEHYDROGENASE [UBIQUINONE] IRON-SULFUR PROTEIN 2, MITOCHONDRIAL"/>
    <property type="match status" value="1"/>
</dbReference>
<dbReference type="PANTHER" id="PTHR11993">
    <property type="entry name" value="NADH-UBIQUINONE OXIDOREDUCTASE 49 KDA SUBUNIT"/>
    <property type="match status" value="1"/>
</dbReference>
<dbReference type="Pfam" id="PF00346">
    <property type="entry name" value="Complex1_49kDa"/>
    <property type="match status" value="1"/>
</dbReference>
<dbReference type="SUPFAM" id="SSF56762">
    <property type="entry name" value="HydB/Nqo4-like"/>
    <property type="match status" value="1"/>
</dbReference>
<dbReference type="PROSITE" id="PS00535">
    <property type="entry name" value="COMPLEX1_49K"/>
    <property type="match status" value="1"/>
</dbReference>
<keyword id="KW-0997">Cell inner membrane</keyword>
<keyword id="KW-1003">Cell membrane</keyword>
<keyword id="KW-0472">Membrane</keyword>
<keyword id="KW-0520">NAD</keyword>
<keyword id="KW-0874">Quinone</keyword>
<keyword id="KW-1185">Reference proteome</keyword>
<keyword id="KW-1278">Translocase</keyword>
<keyword id="KW-0813">Transport</keyword>
<keyword id="KW-0830">Ubiquinone</keyword>
<sequence>MMDGGKGFEDALTGEQKIRNFNINFGPQHPAAHGVLRMVLELDGEIVERCDPHIGLLHRGTEKLMESRTYLQNLPYFDRLDYVAPMNQEHAWCLAIEKLTGVEVPRRASLIRVLYSEIGRILNHLLNVTTQAMDVGALTPPLWGFEEREKLMVFYERACGARLHAAYFRPGGVHQDLPDALLDDIEAWSHTFPNVLDDIDGLLTENRIFKQRNCDIGVVSEEEILQYGFSGVMVRGSGLAWDLRRAQPYECYDEFEFQVPVGKNGDCYDRYLCRMEEMRQSISIIRQAIAKLRDCPGDVLARGKLTPPKRGDMKTSMESLIHHFKLYTEGFHVPAGEVYAAVEAPKGEFGVYLVADGTNKPYRSKIRAPGYLHLQAMDHVARGHQLADVAAIIGTMDIVFGEIDR</sequence>
<gene>
    <name evidence="1" type="primary">nuoD</name>
    <name type="ordered locus">SPO2782</name>
</gene>
<proteinExistence type="inferred from homology"/>
<feature type="chain" id="PRO_0000357927" description="NADH-quinone oxidoreductase subunit D">
    <location>
        <begin position="1"/>
        <end position="405"/>
    </location>
</feature>